<sequence length="183" mass="20877">MNGFSTEEDSREGPPAAPAAAAPGYGQSCCLIEDGERCVRPAGNASFSKRVQKSISQKKLKLDIDKSVRHLYICDFHKNFIQSVRNKRKRKTSDDGGDSPEHDTDIPEVDLFQLQVNTLRRYKRHYKLQTRPGFNKAQLAETVSRHFRNIPVNEKETLAYFIYMVKSNKSRLDQKSEGGKQLE</sequence>
<organism>
    <name type="scientific">Homo sapiens</name>
    <name type="common">Human</name>
    <dbReference type="NCBI Taxonomy" id="9606"/>
    <lineage>
        <taxon>Eukaryota</taxon>
        <taxon>Metazoa</taxon>
        <taxon>Chordata</taxon>
        <taxon>Craniata</taxon>
        <taxon>Vertebrata</taxon>
        <taxon>Euteleostomi</taxon>
        <taxon>Mammalia</taxon>
        <taxon>Eutheria</taxon>
        <taxon>Euarchontoglires</taxon>
        <taxon>Primates</taxon>
        <taxon>Haplorrhini</taxon>
        <taxon>Catarrhini</taxon>
        <taxon>Hominidae</taxon>
        <taxon>Homo</taxon>
    </lineage>
</organism>
<reference key="1">
    <citation type="journal article" date="2003" name="BMC Genomics">
        <title>TGF-beta induces the expression of SAP30L, a novel nuclear protein.</title>
        <authorList>
            <person name="Lindfors K."/>
            <person name="Viiri K.M."/>
            <person name="Niittynen M."/>
            <person name="Heinonen T.Y."/>
            <person name="Maki M."/>
            <person name="Kainulainen H."/>
        </authorList>
    </citation>
    <scope>NUCLEOTIDE SEQUENCE [MRNA] (ISOFORM 1)</scope>
    <scope>SUBCELLULAR LOCATION</scope>
    <scope>MUTAGENESIS OF 88-ARG-LYS-89</scope>
    <scope>INDUCTION</scope>
    <scope>TISSUE SPECIFICITY</scope>
    <source>
        <tissue>Heart</tissue>
    </source>
</reference>
<reference key="2">
    <citation type="submission" date="2004-12" db="EMBL/GenBank/DDBJ databases">
        <title>Homo sapiens gene 2 transactivated by nonstructural protein 4A of hepatitis C virus (NS4ATP2) mRNA.</title>
        <authorList>
            <person name="Liu Y."/>
            <person name="Yang Y."/>
            <person name="Cheng J."/>
            <person name="Ji D."/>
            <person name="Li L."/>
            <person name="Zhang L."/>
            <person name="Chen J."/>
        </authorList>
    </citation>
    <scope>NUCLEOTIDE SEQUENCE [MRNA] (ISOFORM 1)</scope>
</reference>
<reference key="3">
    <citation type="journal article" date="2004" name="Nat. Genet.">
        <title>Complete sequencing and characterization of 21,243 full-length human cDNAs.</title>
        <authorList>
            <person name="Ota T."/>
            <person name="Suzuki Y."/>
            <person name="Nishikawa T."/>
            <person name="Otsuki T."/>
            <person name="Sugiyama T."/>
            <person name="Irie R."/>
            <person name="Wakamatsu A."/>
            <person name="Hayashi K."/>
            <person name="Sato H."/>
            <person name="Nagai K."/>
            <person name="Kimura K."/>
            <person name="Makita H."/>
            <person name="Sekine M."/>
            <person name="Obayashi M."/>
            <person name="Nishi T."/>
            <person name="Shibahara T."/>
            <person name="Tanaka T."/>
            <person name="Ishii S."/>
            <person name="Yamamoto J."/>
            <person name="Saito K."/>
            <person name="Kawai Y."/>
            <person name="Isono Y."/>
            <person name="Nakamura Y."/>
            <person name="Nagahari K."/>
            <person name="Murakami K."/>
            <person name="Yasuda T."/>
            <person name="Iwayanagi T."/>
            <person name="Wagatsuma M."/>
            <person name="Shiratori A."/>
            <person name="Sudo H."/>
            <person name="Hosoiri T."/>
            <person name="Kaku Y."/>
            <person name="Kodaira H."/>
            <person name="Kondo H."/>
            <person name="Sugawara M."/>
            <person name="Takahashi M."/>
            <person name="Kanda K."/>
            <person name="Yokoi T."/>
            <person name="Furuya T."/>
            <person name="Kikkawa E."/>
            <person name="Omura Y."/>
            <person name="Abe K."/>
            <person name="Kamihara K."/>
            <person name="Katsuta N."/>
            <person name="Sato K."/>
            <person name="Tanikawa M."/>
            <person name="Yamazaki M."/>
            <person name="Ninomiya K."/>
            <person name="Ishibashi T."/>
            <person name="Yamashita H."/>
            <person name="Murakawa K."/>
            <person name="Fujimori K."/>
            <person name="Tanai H."/>
            <person name="Kimata M."/>
            <person name="Watanabe M."/>
            <person name="Hiraoka S."/>
            <person name="Chiba Y."/>
            <person name="Ishida S."/>
            <person name="Ono Y."/>
            <person name="Takiguchi S."/>
            <person name="Watanabe S."/>
            <person name="Yosida M."/>
            <person name="Hotuta T."/>
            <person name="Kusano J."/>
            <person name="Kanehori K."/>
            <person name="Takahashi-Fujii A."/>
            <person name="Hara H."/>
            <person name="Tanase T.-O."/>
            <person name="Nomura Y."/>
            <person name="Togiya S."/>
            <person name="Komai F."/>
            <person name="Hara R."/>
            <person name="Takeuchi K."/>
            <person name="Arita M."/>
            <person name="Imose N."/>
            <person name="Musashino K."/>
            <person name="Yuuki H."/>
            <person name="Oshima A."/>
            <person name="Sasaki N."/>
            <person name="Aotsuka S."/>
            <person name="Yoshikawa Y."/>
            <person name="Matsunawa H."/>
            <person name="Ichihara T."/>
            <person name="Shiohata N."/>
            <person name="Sano S."/>
            <person name="Moriya S."/>
            <person name="Momiyama H."/>
            <person name="Satoh N."/>
            <person name="Takami S."/>
            <person name="Terashima Y."/>
            <person name="Suzuki O."/>
            <person name="Nakagawa S."/>
            <person name="Senoh A."/>
            <person name="Mizoguchi H."/>
            <person name="Goto Y."/>
            <person name="Shimizu F."/>
            <person name="Wakebe H."/>
            <person name="Hishigaki H."/>
            <person name="Watanabe T."/>
            <person name="Sugiyama A."/>
            <person name="Takemoto M."/>
            <person name="Kawakami B."/>
            <person name="Yamazaki M."/>
            <person name="Watanabe K."/>
            <person name="Kumagai A."/>
            <person name="Itakura S."/>
            <person name="Fukuzumi Y."/>
            <person name="Fujimori Y."/>
            <person name="Komiyama M."/>
            <person name="Tashiro H."/>
            <person name="Tanigami A."/>
            <person name="Fujiwara T."/>
            <person name="Ono T."/>
            <person name="Yamada K."/>
            <person name="Fujii Y."/>
            <person name="Ozaki K."/>
            <person name="Hirao M."/>
            <person name="Ohmori Y."/>
            <person name="Kawabata A."/>
            <person name="Hikiji T."/>
            <person name="Kobatake N."/>
            <person name="Inagaki H."/>
            <person name="Ikema Y."/>
            <person name="Okamoto S."/>
            <person name="Okitani R."/>
            <person name="Kawakami T."/>
            <person name="Noguchi S."/>
            <person name="Itoh T."/>
            <person name="Shigeta K."/>
            <person name="Senba T."/>
            <person name="Matsumura K."/>
            <person name="Nakajima Y."/>
            <person name="Mizuno T."/>
            <person name="Morinaga M."/>
            <person name="Sasaki M."/>
            <person name="Togashi T."/>
            <person name="Oyama M."/>
            <person name="Hata H."/>
            <person name="Watanabe M."/>
            <person name="Komatsu T."/>
            <person name="Mizushima-Sugano J."/>
            <person name="Satoh T."/>
            <person name="Shirai Y."/>
            <person name="Takahashi Y."/>
            <person name="Nakagawa K."/>
            <person name="Okumura K."/>
            <person name="Nagase T."/>
            <person name="Nomura N."/>
            <person name="Kikuchi H."/>
            <person name="Masuho Y."/>
            <person name="Yamashita R."/>
            <person name="Nakai K."/>
            <person name="Yada T."/>
            <person name="Nakamura Y."/>
            <person name="Ohara O."/>
            <person name="Isogai T."/>
            <person name="Sugano S."/>
        </authorList>
    </citation>
    <scope>NUCLEOTIDE SEQUENCE [LARGE SCALE MRNA] (ISOFORM 1)</scope>
    <source>
        <tissue>Embryo</tissue>
    </source>
</reference>
<reference key="4">
    <citation type="journal article" date="2004" name="Nature">
        <title>The DNA sequence and comparative analysis of human chromosome 5.</title>
        <authorList>
            <person name="Schmutz J."/>
            <person name="Martin J."/>
            <person name="Terry A."/>
            <person name="Couronne O."/>
            <person name="Grimwood J."/>
            <person name="Lowry S."/>
            <person name="Gordon L.A."/>
            <person name="Scott D."/>
            <person name="Xie G."/>
            <person name="Huang W."/>
            <person name="Hellsten U."/>
            <person name="Tran-Gyamfi M."/>
            <person name="She X."/>
            <person name="Prabhakar S."/>
            <person name="Aerts A."/>
            <person name="Altherr M."/>
            <person name="Bajorek E."/>
            <person name="Black S."/>
            <person name="Branscomb E."/>
            <person name="Caoile C."/>
            <person name="Challacombe J.F."/>
            <person name="Chan Y.M."/>
            <person name="Denys M."/>
            <person name="Detter J.C."/>
            <person name="Escobar J."/>
            <person name="Flowers D."/>
            <person name="Fotopulos D."/>
            <person name="Glavina T."/>
            <person name="Gomez M."/>
            <person name="Gonzales E."/>
            <person name="Goodstein D."/>
            <person name="Grigoriev I."/>
            <person name="Groza M."/>
            <person name="Hammon N."/>
            <person name="Hawkins T."/>
            <person name="Haydu L."/>
            <person name="Israni S."/>
            <person name="Jett J."/>
            <person name="Kadner K."/>
            <person name="Kimball H."/>
            <person name="Kobayashi A."/>
            <person name="Lopez F."/>
            <person name="Lou Y."/>
            <person name="Martinez D."/>
            <person name="Medina C."/>
            <person name="Morgan J."/>
            <person name="Nandkeshwar R."/>
            <person name="Noonan J.P."/>
            <person name="Pitluck S."/>
            <person name="Pollard M."/>
            <person name="Predki P."/>
            <person name="Priest J."/>
            <person name="Ramirez L."/>
            <person name="Retterer J."/>
            <person name="Rodriguez A."/>
            <person name="Rogers S."/>
            <person name="Salamov A."/>
            <person name="Salazar A."/>
            <person name="Thayer N."/>
            <person name="Tice H."/>
            <person name="Tsai M."/>
            <person name="Ustaszewska A."/>
            <person name="Vo N."/>
            <person name="Wheeler J."/>
            <person name="Wu K."/>
            <person name="Yang J."/>
            <person name="Dickson M."/>
            <person name="Cheng J.-F."/>
            <person name="Eichler E.E."/>
            <person name="Olsen A."/>
            <person name="Pennacchio L.A."/>
            <person name="Rokhsar D.S."/>
            <person name="Richardson P."/>
            <person name="Lucas S.M."/>
            <person name="Myers R.M."/>
            <person name="Rubin E.M."/>
        </authorList>
    </citation>
    <scope>NUCLEOTIDE SEQUENCE [LARGE SCALE GENOMIC DNA]</scope>
</reference>
<reference key="5">
    <citation type="submission" date="2005-07" db="EMBL/GenBank/DDBJ databases">
        <authorList>
            <person name="Mural R.J."/>
            <person name="Istrail S."/>
            <person name="Sutton G.G."/>
            <person name="Florea L."/>
            <person name="Halpern A.L."/>
            <person name="Mobarry C.M."/>
            <person name="Lippert R."/>
            <person name="Walenz B."/>
            <person name="Shatkay H."/>
            <person name="Dew I."/>
            <person name="Miller J.R."/>
            <person name="Flanigan M.J."/>
            <person name="Edwards N.J."/>
            <person name="Bolanos R."/>
            <person name="Fasulo D."/>
            <person name="Halldorsson B.V."/>
            <person name="Hannenhalli S."/>
            <person name="Turner R."/>
            <person name="Yooseph S."/>
            <person name="Lu F."/>
            <person name="Nusskern D.R."/>
            <person name="Shue B.C."/>
            <person name="Zheng X.H."/>
            <person name="Zhong F."/>
            <person name="Delcher A.L."/>
            <person name="Huson D.H."/>
            <person name="Kravitz S.A."/>
            <person name="Mouchard L."/>
            <person name="Reinert K."/>
            <person name="Remington K.A."/>
            <person name="Clark A.G."/>
            <person name="Waterman M.S."/>
            <person name="Eichler E.E."/>
            <person name="Adams M.D."/>
            <person name="Hunkapiller M.W."/>
            <person name="Myers E.W."/>
            <person name="Venter J.C."/>
        </authorList>
    </citation>
    <scope>NUCLEOTIDE SEQUENCE [LARGE SCALE GENOMIC DNA]</scope>
</reference>
<reference key="6">
    <citation type="journal article" date="2004" name="Genome Res.">
        <title>The status, quality, and expansion of the NIH full-length cDNA project: the Mammalian Gene Collection (MGC).</title>
        <authorList>
            <consortium name="The MGC Project Team"/>
        </authorList>
    </citation>
    <scope>NUCLEOTIDE SEQUENCE [LARGE SCALE MRNA] (ISOFORM 1)</scope>
    <source>
        <tissue>Lung</tissue>
    </source>
</reference>
<reference key="7">
    <citation type="submission" date="1999-03" db="EMBL/GenBank/DDBJ databases">
        <authorList>
            <consortium name="The Cancer Genome Anatomy Project (CGAP) at the National Cancer Institute"/>
        </authorList>
    </citation>
    <scope>NUCLEOTIDE SEQUENCE [LARGE SCALE MRNA] OF 1-135 (ISOFORM 2)</scope>
    <scope>NUCLEOTIDE SEQUENCE [LARGE SCALE MRNA] OF 1-137 (ISOFORM 3)</scope>
    <source>
        <tissue>Chronic myeloid leukemia cell</tissue>
        <tissue>Oligodendroglioma</tissue>
    </source>
</reference>
<reference key="8">
    <citation type="journal article" date="2006" name="J. Biol. Chem.">
        <title>FEZ1 dimerization and interaction with transcription regulatory proteins involves its coiled-coil region.</title>
        <authorList>
            <person name="Assmann E.M."/>
            <person name="Alborghetti M.R."/>
            <person name="Camargo M.E.R."/>
            <person name="Kobarg J."/>
        </authorList>
    </citation>
    <scope>INTERACTION WITH FEZ1</scope>
</reference>
<reference key="9">
    <citation type="journal article" date="2006" name="Nucleic Acids Res.">
        <title>SAP30L interacts with members of the Sin3A corepressor complex and targets Sin3A to the nucleolus.</title>
        <authorList>
            <person name="Viiri K.M."/>
            <person name="Korkeamaeki H."/>
            <person name="Kukkonen M.K."/>
            <person name="Nieminen L.K."/>
            <person name="Lindfors K."/>
            <person name="Peterson P."/>
            <person name="Maeki M."/>
            <person name="Kainulainen H."/>
            <person name="Lohi O."/>
        </authorList>
    </citation>
    <scope>FUNCTION</scope>
    <scope>SUBCELLULAR LOCATION</scope>
    <scope>INTERACTION WITH SIN3A; HDAC1 AND HDAC2</scope>
    <scope>MUTAGENESIS OF 120-ARG--LYS-127</scope>
</reference>
<reference key="10">
    <citation type="journal article" date="2008" name="FEBS Lett.">
        <title>Alternative mRNA splicing of SAP30L regulates its transcriptional repression activity.</title>
        <authorList>
            <person name="Korkeamaeki H."/>
            <person name="Viiri K."/>
            <person name="Kukkonen M.K."/>
            <person name="Maeki M."/>
            <person name="Lohi O."/>
        </authorList>
    </citation>
    <scope>ALTERNATIVE SPLICING</scope>
    <scope>IDENTIFICATION OF ISOFORMS 1; 2 AND 3</scope>
    <scope>FUNCTION</scope>
    <scope>SUBCELLULAR LOCATION</scope>
    <scope>TISSUE SPECIFICITY</scope>
    <scope>MUTAGENESIS OF 109-VAL--GLN-113</scope>
</reference>
<reference key="11">
    <citation type="journal article" date="2008" name="Proc. Natl. Acad. Sci. U.S.A.">
        <title>A quantitative atlas of mitotic phosphorylation.</title>
        <authorList>
            <person name="Dephoure N."/>
            <person name="Zhou C."/>
            <person name="Villen J."/>
            <person name="Beausoleil S.A."/>
            <person name="Bakalarski C.E."/>
            <person name="Elledge S.J."/>
            <person name="Gygi S.P."/>
        </authorList>
    </citation>
    <scope>PHOSPHORYLATION [LARGE SCALE ANALYSIS] AT THR-92 AND SER-99</scope>
    <scope>IDENTIFICATION BY MASS SPECTROMETRY [LARGE SCALE ANALYSIS]</scope>
    <source>
        <tissue>Cervix carcinoma</tissue>
    </source>
</reference>
<reference key="12">
    <citation type="journal article" date="2009" name="Mol. Cell. Biol.">
        <title>DNA-binding and -bending activities of SAP30L and SAP30 are mediated by a zinc-dependent module and monophosphoinositides.</title>
        <authorList>
            <person name="Viiri K.M."/>
            <person name="Jaenis J."/>
            <person name="Siggers T."/>
            <person name="Heinonen T.Y."/>
            <person name="Valjakka J."/>
            <person name="Bulyk M.L."/>
            <person name="Maeki M."/>
            <person name="Lohi O."/>
        </authorList>
    </citation>
    <scope>FUNCTION</scope>
    <scope>LIPID-BINDING</scope>
    <scope>DNA-BINDING</scope>
    <scope>SUBCELLULAR LOCATION</scope>
    <scope>MUTAGENESIS OF 88-ARG--ARG-90</scope>
</reference>
<reference key="13">
    <citation type="journal article" date="2009" name="Sci. Signal.">
        <title>Quantitative phosphoproteomic analysis of T cell receptor signaling reveals system-wide modulation of protein-protein interactions.</title>
        <authorList>
            <person name="Mayya V."/>
            <person name="Lundgren D.H."/>
            <person name="Hwang S.-I."/>
            <person name="Rezaul K."/>
            <person name="Wu L."/>
            <person name="Eng J.K."/>
            <person name="Rodionov V."/>
            <person name="Han D.K."/>
        </authorList>
    </citation>
    <scope>PHOSPHORYLATION [LARGE SCALE ANALYSIS] AT THR-104</scope>
    <scope>IDENTIFICATION BY MASS SPECTROMETRY [LARGE SCALE ANALYSIS]</scope>
    <source>
        <tissue>Leukemic T-cell</tissue>
    </source>
</reference>
<reference key="14">
    <citation type="journal article" date="2012" name="Proc. Natl. Acad. Sci. U.S.A.">
        <title>N-terminal acetylome analyses and functional insights of the N-terminal acetyltransferase NatB.</title>
        <authorList>
            <person name="Van Damme P."/>
            <person name="Lasa M."/>
            <person name="Polevoda B."/>
            <person name="Gazquez C."/>
            <person name="Elosegui-Artola A."/>
            <person name="Kim D.S."/>
            <person name="De Juan-Pardo E."/>
            <person name="Demeyer K."/>
            <person name="Hole K."/>
            <person name="Larrea E."/>
            <person name="Timmerman E."/>
            <person name="Prieto J."/>
            <person name="Arnesen T."/>
            <person name="Sherman F."/>
            <person name="Gevaert K."/>
            <person name="Aldabe R."/>
        </authorList>
    </citation>
    <scope>ACETYLATION [LARGE SCALE ANALYSIS] AT MET-1</scope>
    <scope>IDENTIFICATION BY MASS SPECTROMETRY [LARGE SCALE ANALYSIS]</scope>
</reference>
<reference key="15">
    <citation type="journal article" date="2014" name="J. Proteomics">
        <title>An enzyme assisted RP-RPLC approach for in-depth analysis of human liver phosphoproteome.</title>
        <authorList>
            <person name="Bian Y."/>
            <person name="Song C."/>
            <person name="Cheng K."/>
            <person name="Dong M."/>
            <person name="Wang F."/>
            <person name="Huang J."/>
            <person name="Sun D."/>
            <person name="Wang L."/>
            <person name="Ye M."/>
            <person name="Zou H."/>
        </authorList>
    </citation>
    <scope>IDENTIFICATION BY MASS SPECTROMETRY [LARGE SCALE ANALYSIS]</scope>
    <source>
        <tissue>Liver</tissue>
    </source>
</reference>
<reference key="16">
    <citation type="journal article" date="2016" name="Protein Sci.">
        <title>Redox-dependent disulfide bond formation in SAP30L corepressor protein: Implications for structure and function.</title>
        <authorList>
            <person name="Laitaoja M."/>
            <person name="Tossavainen H."/>
            <person name="Pihlajamaa T."/>
            <person name="Valjakka J."/>
            <person name="Viiri K."/>
            <person name="Lohi O."/>
            <person name="Permi P."/>
            <person name="Janis J."/>
        </authorList>
    </citation>
    <scope>STRUCTURE BY NMR OF 25-92 IN COMPLEX WITH ZINC IONS</scope>
    <scope>FUNCTION</scope>
    <scope>ZINC-FINGER DOMAIN</scope>
    <scope>LIPID-BINDING</scope>
    <scope>DNA-BINDING</scope>
    <scope>DISULFIDE BONDS</scope>
</reference>
<name>SP30L_HUMAN</name>
<dbReference type="EMBL" id="AY341060">
    <property type="protein sequence ID" value="AAQ16562.1"/>
    <property type="molecule type" value="mRNA"/>
</dbReference>
<dbReference type="EMBL" id="AY846876">
    <property type="protein sequence ID" value="AAX54477.1"/>
    <property type="molecule type" value="mRNA"/>
</dbReference>
<dbReference type="EMBL" id="AK021588">
    <property type="protein sequence ID" value="BAB13848.1"/>
    <property type="molecule type" value="mRNA"/>
</dbReference>
<dbReference type="EMBL" id="AC008625">
    <property type="status" value="NOT_ANNOTATED_CDS"/>
    <property type="molecule type" value="Genomic_DNA"/>
</dbReference>
<dbReference type="EMBL" id="CH471062">
    <property type="protein sequence ID" value="EAW61637.1"/>
    <property type="molecule type" value="Genomic_DNA"/>
</dbReference>
<dbReference type="EMBL" id="BC009829">
    <property type="protein sequence ID" value="AAH09829.1"/>
    <property type="molecule type" value="mRNA"/>
</dbReference>
<dbReference type="EMBL" id="AI199517">
    <property type="status" value="NOT_ANNOTATED_CDS"/>
    <property type="molecule type" value="mRNA"/>
</dbReference>
<dbReference type="EMBL" id="AI436556">
    <property type="status" value="NOT_ANNOTATED_CDS"/>
    <property type="molecule type" value="mRNA"/>
</dbReference>
<dbReference type="CCDS" id="CCDS4326.1">
    <molecule id="Q9HAJ7-1"/>
</dbReference>
<dbReference type="CCDS" id="CCDS47321.1">
    <molecule id="Q9HAJ7-3"/>
</dbReference>
<dbReference type="CCDS" id="CCDS47322.1">
    <molecule id="Q9HAJ7-2"/>
</dbReference>
<dbReference type="RefSeq" id="NP_001124534.1">
    <molecule id="Q9HAJ7-3"/>
    <property type="nucleotide sequence ID" value="NM_001131062.2"/>
</dbReference>
<dbReference type="RefSeq" id="NP_001124535.1">
    <molecule id="Q9HAJ7-2"/>
    <property type="nucleotide sequence ID" value="NM_001131063.2"/>
</dbReference>
<dbReference type="RefSeq" id="NP_078908.1">
    <molecule id="Q9HAJ7-1"/>
    <property type="nucleotide sequence ID" value="NM_024632.6"/>
</dbReference>
<dbReference type="PDB" id="2N1U">
    <property type="method" value="NMR"/>
    <property type="chains" value="A=25-92"/>
</dbReference>
<dbReference type="PDBsum" id="2N1U"/>
<dbReference type="SMR" id="Q9HAJ7"/>
<dbReference type="BioGRID" id="122808">
    <property type="interactions" value="34"/>
</dbReference>
<dbReference type="ComplexPortal" id="CPX-3321">
    <property type="entry name" value="SIN3A histone deacetylase complex"/>
</dbReference>
<dbReference type="ComplexPortal" id="CPX-3322">
    <property type="entry name" value="SIN3B histone deacetylase complex"/>
</dbReference>
<dbReference type="ComplexPortal" id="CPX-3323">
    <property type="entry name" value="SIN3A histone deacetylase complex, ES cell-specific variant"/>
</dbReference>
<dbReference type="FunCoup" id="Q9HAJ7">
    <property type="interactions" value="3166"/>
</dbReference>
<dbReference type="IntAct" id="Q9HAJ7">
    <property type="interactions" value="22"/>
</dbReference>
<dbReference type="MINT" id="Q9HAJ7"/>
<dbReference type="STRING" id="9606.ENSP00000297109"/>
<dbReference type="GlyGen" id="Q9HAJ7">
    <property type="glycosylation" value="1 site, 1 O-linked glycan (1 site)"/>
</dbReference>
<dbReference type="iPTMnet" id="Q9HAJ7"/>
<dbReference type="PhosphoSitePlus" id="Q9HAJ7"/>
<dbReference type="BioMuta" id="SAP30L"/>
<dbReference type="DMDM" id="74734226"/>
<dbReference type="jPOST" id="Q9HAJ7"/>
<dbReference type="MassIVE" id="Q9HAJ7"/>
<dbReference type="PaxDb" id="9606-ENSP00000297109"/>
<dbReference type="PeptideAtlas" id="Q9HAJ7"/>
<dbReference type="ProteomicsDB" id="19082"/>
<dbReference type="ProteomicsDB" id="19103"/>
<dbReference type="ProteomicsDB" id="81408">
    <molecule id="Q9HAJ7-1"/>
</dbReference>
<dbReference type="Pumba" id="Q9HAJ7"/>
<dbReference type="Antibodypedia" id="16444">
    <property type="antibodies" value="111 antibodies from 24 providers"/>
</dbReference>
<dbReference type="DNASU" id="79685"/>
<dbReference type="Ensembl" id="ENST00000297109.11">
    <molecule id="Q9HAJ7-1"/>
    <property type="protein sequence ID" value="ENSP00000297109.5"/>
    <property type="gene ID" value="ENSG00000164576.12"/>
</dbReference>
<dbReference type="Ensembl" id="ENST00000426761.2">
    <molecule id="Q9HAJ7-2"/>
    <property type="protein sequence ID" value="ENSP00000416393.2"/>
    <property type="gene ID" value="ENSG00000164576.12"/>
</dbReference>
<dbReference type="Ensembl" id="ENST00000440364.6">
    <molecule id="Q9HAJ7-3"/>
    <property type="protein sequence ID" value="ENSP00000390927.2"/>
    <property type="gene ID" value="ENSG00000164576.12"/>
</dbReference>
<dbReference type="GeneID" id="79685"/>
<dbReference type="KEGG" id="hsa:79685"/>
<dbReference type="MANE-Select" id="ENST00000297109.11">
    <property type="protein sequence ID" value="ENSP00000297109.5"/>
    <property type="RefSeq nucleotide sequence ID" value="NM_024632.6"/>
    <property type="RefSeq protein sequence ID" value="NP_078908.1"/>
</dbReference>
<dbReference type="UCSC" id="uc003lvk.4">
    <molecule id="Q9HAJ7-1"/>
    <property type="organism name" value="human"/>
</dbReference>
<dbReference type="AGR" id="HGNC:25663"/>
<dbReference type="CTD" id="79685"/>
<dbReference type="DisGeNET" id="79685"/>
<dbReference type="GeneCards" id="SAP30L"/>
<dbReference type="HGNC" id="HGNC:25663">
    <property type="gene designation" value="SAP30L"/>
</dbReference>
<dbReference type="HPA" id="ENSG00000164576">
    <property type="expression patterns" value="Low tissue specificity"/>
</dbReference>
<dbReference type="MIM" id="610398">
    <property type="type" value="gene"/>
</dbReference>
<dbReference type="neXtProt" id="NX_Q9HAJ7"/>
<dbReference type="OpenTargets" id="ENSG00000164576"/>
<dbReference type="PharmGKB" id="PA144596386"/>
<dbReference type="VEuPathDB" id="HostDB:ENSG00000164576"/>
<dbReference type="eggNOG" id="ENOG502QWFH">
    <property type="taxonomic scope" value="Eukaryota"/>
</dbReference>
<dbReference type="GeneTree" id="ENSGT00390000006633"/>
<dbReference type="HOGENOM" id="CLU_097961_1_0_1"/>
<dbReference type="InParanoid" id="Q9HAJ7"/>
<dbReference type="OMA" id="SDQICCL"/>
<dbReference type="OrthoDB" id="510958at2759"/>
<dbReference type="PAN-GO" id="Q9HAJ7">
    <property type="GO annotations" value="3 GO annotations based on evolutionary models"/>
</dbReference>
<dbReference type="PhylomeDB" id="Q9HAJ7"/>
<dbReference type="TreeFam" id="TF324135"/>
<dbReference type="PathwayCommons" id="Q9HAJ7"/>
<dbReference type="Reactome" id="R-HSA-3214815">
    <property type="pathway name" value="HDACs deacetylate histones"/>
</dbReference>
<dbReference type="Reactome" id="R-HSA-427413">
    <property type="pathway name" value="NoRC negatively regulates rRNA expression"/>
</dbReference>
<dbReference type="Reactome" id="R-HSA-9679191">
    <property type="pathway name" value="Potential therapeutics for SARS"/>
</dbReference>
<dbReference type="SignaLink" id="Q9HAJ7"/>
<dbReference type="BioGRID-ORCS" id="79685">
    <property type="hits" value="11 hits in 1161 CRISPR screens"/>
</dbReference>
<dbReference type="CD-CODE" id="91857CE7">
    <property type="entry name" value="Nucleolus"/>
</dbReference>
<dbReference type="ChiTaRS" id="SAP30L">
    <property type="organism name" value="human"/>
</dbReference>
<dbReference type="EvolutionaryTrace" id="Q9HAJ7"/>
<dbReference type="GenomeRNAi" id="79685"/>
<dbReference type="Pharos" id="Q9HAJ7">
    <property type="development level" value="Tbio"/>
</dbReference>
<dbReference type="PRO" id="PR:Q9HAJ7"/>
<dbReference type="Proteomes" id="UP000005640">
    <property type="component" value="Chromosome 5"/>
</dbReference>
<dbReference type="RNAct" id="Q9HAJ7">
    <property type="molecule type" value="protein"/>
</dbReference>
<dbReference type="Bgee" id="ENSG00000164576">
    <property type="expression patterns" value="Expressed in right testis and 183 other cell types or tissues"/>
</dbReference>
<dbReference type="GO" id="GO:0001650">
    <property type="term" value="C:fibrillar center"/>
    <property type="evidence" value="ECO:0000314"/>
    <property type="project" value="HPA"/>
</dbReference>
<dbReference type="GO" id="GO:0000118">
    <property type="term" value="C:histone deacetylase complex"/>
    <property type="evidence" value="ECO:0000314"/>
    <property type="project" value="UniProtKB"/>
</dbReference>
<dbReference type="GO" id="GO:0005730">
    <property type="term" value="C:nucleolus"/>
    <property type="evidence" value="ECO:0000314"/>
    <property type="project" value="UniProtKB"/>
</dbReference>
<dbReference type="GO" id="GO:0005654">
    <property type="term" value="C:nucleoplasm"/>
    <property type="evidence" value="ECO:0000314"/>
    <property type="project" value="HPA"/>
</dbReference>
<dbReference type="GO" id="GO:0005634">
    <property type="term" value="C:nucleus"/>
    <property type="evidence" value="ECO:0000303"/>
    <property type="project" value="ComplexPortal"/>
</dbReference>
<dbReference type="GO" id="GO:0070822">
    <property type="term" value="C:Sin3-type complex"/>
    <property type="evidence" value="ECO:0000303"/>
    <property type="project" value="ComplexPortal"/>
</dbReference>
<dbReference type="GO" id="GO:0003677">
    <property type="term" value="F:DNA binding"/>
    <property type="evidence" value="ECO:0000314"/>
    <property type="project" value="UniProtKB"/>
</dbReference>
<dbReference type="GO" id="GO:0042393">
    <property type="term" value="F:histone binding"/>
    <property type="evidence" value="ECO:0000314"/>
    <property type="project" value="UniProtKB"/>
</dbReference>
<dbReference type="GO" id="GO:0044378">
    <property type="term" value="F:non-sequence-specific DNA binding, bending"/>
    <property type="evidence" value="ECO:0000314"/>
    <property type="project" value="UniProtKB"/>
</dbReference>
<dbReference type="GO" id="GO:0031491">
    <property type="term" value="F:nucleosome binding"/>
    <property type="evidence" value="ECO:0000314"/>
    <property type="project" value="UniProtKB"/>
</dbReference>
<dbReference type="GO" id="GO:0032266">
    <property type="term" value="F:phosphatidylinositol-3-phosphate binding"/>
    <property type="evidence" value="ECO:0000314"/>
    <property type="project" value="UniProtKB"/>
</dbReference>
<dbReference type="GO" id="GO:0070273">
    <property type="term" value="F:phosphatidylinositol-4-phosphate binding"/>
    <property type="evidence" value="ECO:0000314"/>
    <property type="project" value="UniProtKB"/>
</dbReference>
<dbReference type="GO" id="GO:0010314">
    <property type="term" value="F:phosphatidylinositol-5-phosphate binding"/>
    <property type="evidence" value="ECO:0000314"/>
    <property type="project" value="UniProtKB"/>
</dbReference>
<dbReference type="GO" id="GO:0003712">
    <property type="term" value="F:transcription coregulator activity"/>
    <property type="evidence" value="ECO:0000318"/>
    <property type="project" value="GO_Central"/>
</dbReference>
<dbReference type="GO" id="GO:0008270">
    <property type="term" value="F:zinc ion binding"/>
    <property type="evidence" value="ECO:0000314"/>
    <property type="project" value="UniProtKB"/>
</dbReference>
<dbReference type="GO" id="GO:0030336">
    <property type="term" value="P:negative regulation of cell migration"/>
    <property type="evidence" value="ECO:0000303"/>
    <property type="project" value="ComplexPortal"/>
</dbReference>
<dbReference type="GO" id="GO:1902455">
    <property type="term" value="P:negative regulation of stem cell population maintenance"/>
    <property type="evidence" value="ECO:0000303"/>
    <property type="project" value="ComplexPortal"/>
</dbReference>
<dbReference type="GO" id="GO:0000122">
    <property type="term" value="P:negative regulation of transcription by RNA polymerase II"/>
    <property type="evidence" value="ECO:0000314"/>
    <property type="project" value="UniProtKB"/>
</dbReference>
<dbReference type="GO" id="GO:0030512">
    <property type="term" value="P:negative regulation of transforming growth factor beta receptor signaling pathway"/>
    <property type="evidence" value="ECO:0000303"/>
    <property type="project" value="ComplexPortal"/>
</dbReference>
<dbReference type="GO" id="GO:1902459">
    <property type="term" value="P:positive regulation of stem cell population maintenance"/>
    <property type="evidence" value="ECO:0000303"/>
    <property type="project" value="ComplexPortal"/>
</dbReference>
<dbReference type="GO" id="GO:0006355">
    <property type="term" value="P:regulation of DNA-templated transcription"/>
    <property type="evidence" value="ECO:0000318"/>
    <property type="project" value="GO_Central"/>
</dbReference>
<dbReference type="FunFam" id="3.40.1800.30:FF:000001">
    <property type="entry name" value="Histone deacetylase complex subunit"/>
    <property type="match status" value="1"/>
</dbReference>
<dbReference type="Gene3D" id="3.40.1800.30">
    <property type="match status" value="1"/>
</dbReference>
<dbReference type="Gene3D" id="6.10.160.20">
    <property type="match status" value="1"/>
</dbReference>
<dbReference type="InterPro" id="IPR024145">
    <property type="entry name" value="His_deAcase_SAP30/SAP30L"/>
</dbReference>
<dbReference type="InterPro" id="IPR038291">
    <property type="entry name" value="SAP30_C_sf"/>
</dbReference>
<dbReference type="InterPro" id="IPR025718">
    <property type="entry name" value="SAP30_Sin3-bd"/>
</dbReference>
<dbReference type="InterPro" id="IPR025717">
    <property type="entry name" value="SAP30_zn-finger"/>
</dbReference>
<dbReference type="PANTHER" id="PTHR13286:SF5">
    <property type="entry name" value="HISTONE DEACETYLASE COMPLEX SUBUNIT SAP30L"/>
    <property type="match status" value="1"/>
</dbReference>
<dbReference type="PANTHER" id="PTHR13286">
    <property type="entry name" value="SAP30"/>
    <property type="match status" value="1"/>
</dbReference>
<dbReference type="Pfam" id="PF13867">
    <property type="entry name" value="SAP30_Sin3_bdg"/>
    <property type="match status" value="1"/>
</dbReference>
<dbReference type="Pfam" id="PF13866">
    <property type="entry name" value="zf-SAP30"/>
    <property type="match status" value="1"/>
</dbReference>
<protein>
    <recommendedName>
        <fullName>Histone deacetylase complex subunit SAP30L</fullName>
    </recommendedName>
    <alternativeName>
        <fullName>HCV non-structural protein 4A-transactivated protein 2</fullName>
    </alternativeName>
    <alternativeName>
        <fullName>Sin3 corepressor complex subunit SAP30L</fullName>
    </alternativeName>
    <alternativeName>
        <fullName>Sin3-associated protein p30-like</fullName>
    </alternativeName>
</protein>
<gene>
    <name type="primary">SAP30L</name>
    <name type="synonym">NS4ATP2</name>
</gene>
<feature type="chain" id="PRO_0000309500" description="Histone deacetylase complex subunit SAP30L">
    <location>
        <begin position="1"/>
        <end position="183"/>
    </location>
</feature>
<feature type="zinc finger region" description="Atypical" evidence="14">
    <location>
        <begin position="29"/>
        <end position="77"/>
    </location>
</feature>
<feature type="region of interest" description="Disordered" evidence="3">
    <location>
        <begin position="1"/>
        <end position="23"/>
    </location>
</feature>
<feature type="region of interest" description="Disordered" evidence="3">
    <location>
        <begin position="85"/>
        <end position="105"/>
    </location>
</feature>
<feature type="region of interest" description="Important for DNA and phosphoinositide binding" evidence="8">
    <location>
        <begin position="88"/>
        <end position="90"/>
    </location>
</feature>
<feature type="short sequence motif" description="Nuclear localization signal (NLS)" evidence="12">
    <location>
        <begin position="86"/>
        <end position="91"/>
    </location>
</feature>
<feature type="compositionally biased region" description="Acidic residues" evidence="3">
    <location>
        <begin position="1"/>
        <end position="10"/>
    </location>
</feature>
<feature type="modified residue" description="N-acetylmethionine" evidence="17">
    <location>
        <position position="1"/>
    </location>
</feature>
<feature type="modified residue" description="Phosphothreonine" evidence="15">
    <location>
        <position position="92"/>
    </location>
</feature>
<feature type="modified residue" description="Phosphoserine" evidence="2">
    <location>
        <position position="93"/>
    </location>
</feature>
<feature type="modified residue" description="Phosphoserine" evidence="15">
    <location>
        <position position="99"/>
    </location>
</feature>
<feature type="modified residue" description="Phosphothreonine" evidence="16">
    <location>
        <position position="104"/>
    </location>
</feature>
<feature type="disulfide bond" description="Redox-active" evidence="9">
    <location>
        <begin position="29"/>
        <end position="30"/>
    </location>
</feature>
<feature type="disulfide bond" description="Redox-active" evidence="9">
    <location>
        <begin position="38"/>
        <end position="74"/>
    </location>
</feature>
<feature type="cross-link" description="Glycyl lysine isopeptide (Lys-Gly) (interchain with G-Cter in SUMO2)" evidence="1">
    <location>
        <position position="49"/>
    </location>
</feature>
<feature type="cross-link" description="Glycyl lysine isopeptide (Lys-Gly) (interchain with G-Cter in SUMO2)" evidence="1">
    <location>
        <position position="155"/>
    </location>
</feature>
<feature type="cross-link" description="Glycyl lysine isopeptide (Lys-Gly) (interchain with G-Cter in SUMO2)" evidence="1">
    <location>
        <position position="166"/>
    </location>
</feature>
<feature type="cross-link" description="Glycyl lysine isopeptide (Lys-Gly) (interchain with G-Cter in SUMO2)" evidence="1">
    <location>
        <position position="175"/>
    </location>
</feature>
<feature type="splice variant" id="VSP_046221" description="In isoform 2." evidence="10 13">
    <location>
        <begin position="68"/>
        <end position="113"/>
    </location>
</feature>
<feature type="splice variant" id="VSP_046860" description="In isoform 3." evidence="10 13">
    <location>
        <begin position="68"/>
        <end position="108"/>
    </location>
</feature>
<feature type="mutagenesis site" description="Strongly reduces affinity for DNA and for phosphoinositides." evidence="8">
    <original>RKR</original>
    <variation>AAA</variation>
    <location>
        <begin position="88"/>
        <end position="90"/>
    </location>
</feature>
<feature type="mutagenesis site" description="Impairs nuclear localization." evidence="4">
    <original>RK</original>
    <variation>KS</variation>
    <location>
        <begin position="88"/>
        <end position="89"/>
    </location>
</feature>
<feature type="mutagenesis site" description="Reduces transcriptional repressor activity, reduces localization in nucleoli, but has no effect on association with histone deacylase complexes." evidence="7">
    <location>
        <begin position="109"/>
        <end position="113"/>
    </location>
</feature>
<feature type="mutagenesis site" description="Abolishes nucleolar localization." evidence="6">
    <original>RRYKRHYK</original>
    <variation>AAAAAAAA</variation>
    <location>
        <begin position="120"/>
        <end position="127"/>
    </location>
</feature>
<feature type="sequence conflict" description="In Ref. 7; AI199517." evidence="11" ref="7">
    <original>L</original>
    <variation>R</variation>
    <location>
        <position position="31"/>
    </location>
</feature>
<feature type="strand" evidence="18">
    <location>
        <begin position="31"/>
        <end position="33"/>
    </location>
</feature>
<feature type="strand" evidence="18">
    <location>
        <begin position="41"/>
        <end position="46"/>
    </location>
</feature>
<feature type="helix" evidence="18">
    <location>
        <begin position="51"/>
        <end position="56"/>
    </location>
</feature>
<feature type="strand" evidence="18">
    <location>
        <begin position="61"/>
        <end position="64"/>
    </location>
</feature>
<feature type="turn" evidence="18">
    <location>
        <begin position="66"/>
        <end position="69"/>
    </location>
</feature>
<feature type="strand" evidence="18">
    <location>
        <begin position="72"/>
        <end position="74"/>
    </location>
</feature>
<feature type="helix" evidence="18">
    <location>
        <begin position="75"/>
        <end position="83"/>
    </location>
</feature>
<accession>Q9HAJ7</accession>
<accession>E9PAU7</accession>
<accession>E9PAY2</accession>
<comment type="function">
    <molecule>Isoform 1</molecule>
    <text evidence="6 7 8 9">Functions as a transcription repressor, probably via its interaction with histone deacetylase complexes (PubMed:16820529, PubMed:18070604). Involved in the functional recruitment of the class 1 Sin3-histone deacetylase complex (HDAC) to the nucleolus (PubMed:16820529). Binds DNA, apparently without sequence-specificity, and bends bound double-stranded DNA (PubMed:19015240). Binds phosphoinositol phosphates (phosphoinositol 3-phosphate, phosphoinositol 4-phosphate and phosphoinositol 5-phosphate) via the same basic sequence motif that mediates DNA binding and nuclear import (PubMed:19015240, PubMed:26609676).</text>
</comment>
<comment type="function">
    <molecule>Isoform 2</molecule>
    <text evidence="7">Functions as a transcription repressor; isoform 2 has lower transcription repressor activity than isoform 1 and isoform 3.</text>
</comment>
<comment type="function">
    <molecule>Isoform 3</molecule>
    <text evidence="7">Functions as a transcription repressor; its activity is marginally lower than that of isoform 1.</text>
</comment>
<comment type="subunit">
    <text evidence="5 6 8">Interacts with components of the histone deacetylase complex SIN3A, HDAC1 and HDAC2 (PubMed:16820529). Binds histones and nucleosomes (PubMed:19015240). Interacts with FEZ1 (PubMed:16484223).</text>
</comment>
<comment type="interaction">
    <interactant intactId="EBI-2340040">
        <id>Q9HAJ7</id>
    </interactant>
    <interactant intactId="EBI-739789">
        <id>Q92997</id>
        <label>DVL3</label>
    </interactant>
    <organismsDiffer>false</organismsDiffer>
    <experiments>3</experiments>
</comment>
<comment type="interaction">
    <interactant intactId="EBI-2340040">
        <id>Q9HAJ7</id>
    </interactant>
    <interactant intactId="EBI-2549423">
        <id>Q6NT76</id>
        <label>HMBOX1</label>
    </interactant>
    <organismsDiffer>false</organismsDiffer>
    <experiments>3</experiments>
</comment>
<comment type="subcellular location">
    <molecule>Isoform 1</molecule>
    <subcellularLocation>
        <location evidence="4 6 7 8">Nucleus</location>
        <location evidence="4 6 7 8">Nucleolus</location>
    </subcellularLocation>
</comment>
<comment type="subcellular location">
    <molecule>Isoform 2</molecule>
    <subcellularLocation>
        <location evidence="7">Nucleus</location>
        <location evidence="7">Nucleolus</location>
    </subcellularLocation>
</comment>
<comment type="subcellular location">
    <molecule>Isoform 3</molecule>
    <subcellularLocation>
        <location evidence="7">Nucleus</location>
        <location evidence="7">Nucleolus</location>
    </subcellularLocation>
</comment>
<comment type="alternative products">
    <event type="alternative splicing"/>
    <isoform>
        <id>Q9HAJ7-1</id>
        <name>1</name>
        <sequence type="displayed"/>
    </isoform>
    <isoform>
        <id>Q9HAJ7-2</id>
        <name>2</name>
        <sequence type="described" ref="VSP_046221"/>
    </isoform>
    <isoform>
        <id>Q9HAJ7-3</id>
        <name>3</name>
        <sequence type="described" ref="VSP_046860"/>
    </isoform>
</comment>
<comment type="tissue specificity">
    <text evidence="4 7">Detected in brain and ovary, and at lower levels in heart, small intestine, lung, kidney, skeletal muscle, stomach and spleen (at protein level) (PubMed:18070604). Ubiquitous; expressed in all tissues tested with highest levels in testis (PubMed:14680513).</text>
</comment>
<comment type="induction">
    <text evidence="4">Up-regulated by TGFB1.</text>
</comment>
<comment type="domain">
    <text evidence="9">The zinc-finger domain mediates direct interaction with DNA and phosphoinositol phosphates (phosphoinositol 3-phosphate, phosphoinositol 4-phosphate and phosphoinositol 5-phosphate) (PubMed:26609676). In vitro oxydation causes reversible disulfide bond formation between Cys residues in the zinc-finger domain and reversible loss of zinc ion binding (PubMed:26609676).</text>
</comment>
<comment type="similarity">
    <text evidence="11">Belongs to the SAP30 family.</text>
</comment>
<proteinExistence type="evidence at protein level"/>
<evidence type="ECO:0000250" key="1">
    <source>
        <dbReference type="UniProtKB" id="O75446"/>
    </source>
</evidence>
<evidence type="ECO:0000250" key="2">
    <source>
        <dbReference type="UniProtKB" id="Q5SQF8"/>
    </source>
</evidence>
<evidence type="ECO:0000256" key="3">
    <source>
        <dbReference type="SAM" id="MobiDB-lite"/>
    </source>
</evidence>
<evidence type="ECO:0000269" key="4">
    <source>
    </source>
</evidence>
<evidence type="ECO:0000269" key="5">
    <source>
    </source>
</evidence>
<evidence type="ECO:0000269" key="6">
    <source>
    </source>
</evidence>
<evidence type="ECO:0000269" key="7">
    <source>
    </source>
</evidence>
<evidence type="ECO:0000269" key="8">
    <source>
    </source>
</evidence>
<evidence type="ECO:0000269" key="9">
    <source>
    </source>
</evidence>
<evidence type="ECO:0000303" key="10">
    <source ref="7"/>
</evidence>
<evidence type="ECO:0000305" key="11"/>
<evidence type="ECO:0000305" key="12">
    <source>
    </source>
</evidence>
<evidence type="ECO:0000305" key="13">
    <source>
    </source>
</evidence>
<evidence type="ECO:0000305" key="14">
    <source>
    </source>
</evidence>
<evidence type="ECO:0007744" key="15">
    <source>
    </source>
</evidence>
<evidence type="ECO:0007744" key="16">
    <source>
    </source>
</evidence>
<evidence type="ECO:0007744" key="17">
    <source>
    </source>
</evidence>
<evidence type="ECO:0007829" key="18">
    <source>
        <dbReference type="PDB" id="2N1U"/>
    </source>
</evidence>
<keyword id="KW-0002">3D-structure</keyword>
<keyword id="KW-0007">Acetylation</keyword>
<keyword id="KW-0025">Alternative splicing</keyword>
<keyword id="KW-1015">Disulfide bond</keyword>
<keyword id="KW-0238">DNA-binding</keyword>
<keyword id="KW-1017">Isopeptide bond</keyword>
<keyword id="KW-0446">Lipid-binding</keyword>
<keyword id="KW-0479">Metal-binding</keyword>
<keyword id="KW-0539">Nucleus</keyword>
<keyword id="KW-0597">Phosphoprotein</keyword>
<keyword id="KW-1267">Proteomics identification</keyword>
<keyword id="KW-1185">Reference proteome</keyword>
<keyword id="KW-0678">Repressor</keyword>
<keyword id="KW-0804">Transcription</keyword>
<keyword id="KW-0805">Transcription regulation</keyword>
<keyword id="KW-0832">Ubl conjugation</keyword>
<keyword id="KW-0862">Zinc</keyword>
<keyword id="KW-0863">Zinc-finger</keyword>